<name>G1PDH_BACLD</name>
<feature type="chain" id="PRO_0000350638" description="Glycerol-1-phosphate dehydrogenase [NAD(P)+]">
    <location>
        <begin position="1"/>
        <end position="401"/>
    </location>
</feature>
<feature type="binding site" evidence="1">
    <location>
        <position position="57"/>
    </location>
    <ligand>
        <name>NAD(+)</name>
        <dbReference type="ChEBI" id="CHEBI:57540"/>
    </ligand>
</feature>
<feature type="binding site" evidence="1">
    <location>
        <begin position="118"/>
        <end position="122"/>
    </location>
    <ligand>
        <name>NAD(+)</name>
        <dbReference type="ChEBI" id="CHEBI:57540"/>
    </ligand>
</feature>
<feature type="binding site" evidence="1">
    <location>
        <begin position="140"/>
        <end position="143"/>
    </location>
    <ligand>
        <name>NAD(+)</name>
        <dbReference type="ChEBI" id="CHEBI:57540"/>
    </ligand>
</feature>
<feature type="binding site" evidence="1">
    <location>
        <position position="145"/>
    </location>
    <ligand>
        <name>substrate</name>
    </ligand>
</feature>
<feature type="binding site" evidence="1">
    <location>
        <position position="149"/>
    </location>
    <ligand>
        <name>NAD(+)</name>
        <dbReference type="ChEBI" id="CHEBI:57540"/>
    </ligand>
</feature>
<feature type="binding site" evidence="1">
    <location>
        <position position="192"/>
    </location>
    <ligand>
        <name>Ni(2+)</name>
        <dbReference type="ChEBI" id="CHEBI:49786"/>
        <note>catalytic</note>
    </ligand>
</feature>
<feature type="binding site" evidence="1">
    <location>
        <position position="192"/>
    </location>
    <ligand>
        <name>substrate</name>
    </ligand>
</feature>
<feature type="binding site" evidence="1">
    <location>
        <position position="272"/>
    </location>
    <ligand>
        <name>Ni(2+)</name>
        <dbReference type="ChEBI" id="CHEBI:49786"/>
        <note>catalytic</note>
    </ligand>
</feature>
<feature type="binding site" evidence="1">
    <location>
        <position position="276"/>
    </location>
    <ligand>
        <name>substrate</name>
    </ligand>
</feature>
<feature type="binding site" evidence="1">
    <location>
        <position position="292"/>
    </location>
    <ligand>
        <name>Ni(2+)</name>
        <dbReference type="ChEBI" id="CHEBI:49786"/>
        <note>catalytic</note>
    </ligand>
</feature>
<sequence>MNDLISYVKKTLGACECGTVHHPLTVEKIAIGDNAVEQELPAFVKSASYKKAAVIYDETTGRLAGKRIASLLEETAETVPVLLEANEAGDVTADEQTLVSALIGVPIDADVLIAAGAGTIHDIVRFCAYQRGIPFISVPTAPSVDGFTSAGAPLILKGKKQTVQTTAPIALFADLELLCQAPQNMVAAGFGDMLGKVTSLADWEISRLLAGEPYCPAASRLTREALDQCLDRKDDIAAKMRDGIEKLMESLILSGLVMLVLDHSRPASGGEHHLSHYLEMKALENNKRQVLHGAKVGCSAIMLTDIYRSLIGASLGDQHAEQAIRSVYEKLPDGKKMAEWMRRIGGPVSFKELDVEEELVREALAYAHQLRDRYTGLKIINQYGLLPGLLGKGPGVKGVKM</sequence>
<accession>Q65GC3</accession>
<accession>Q62RS8</accession>
<proteinExistence type="inferred from homology"/>
<evidence type="ECO:0000255" key="1">
    <source>
        <dbReference type="HAMAP-Rule" id="MF_00497"/>
    </source>
</evidence>
<keyword id="KW-0963">Cytoplasm</keyword>
<keyword id="KW-0444">Lipid biosynthesis</keyword>
<keyword id="KW-0443">Lipid metabolism</keyword>
<keyword id="KW-0479">Metal-binding</keyword>
<keyword id="KW-0520">NAD</keyword>
<keyword id="KW-0521">NADP</keyword>
<keyword id="KW-0533">Nickel</keyword>
<keyword id="KW-0560">Oxidoreductase</keyword>
<keyword id="KW-0594">Phospholipid biosynthesis</keyword>
<keyword id="KW-1208">Phospholipid metabolism</keyword>
<keyword id="KW-1185">Reference proteome</keyword>
<gene>
    <name evidence="1" type="primary">egsA</name>
    <name type="synonym">araM</name>
    <name type="ordered locus">BLi03025</name>
    <name type="ordered locus">BL00349</name>
</gene>
<protein>
    <recommendedName>
        <fullName evidence="1">Glycerol-1-phosphate dehydrogenase [NAD(P)+]</fullName>
        <shortName evidence="1">G1P dehydrogenase</shortName>
        <shortName evidence="1">G1PDH</shortName>
        <ecNumber evidence="1">1.1.1.261</ecNumber>
    </recommendedName>
    <alternativeName>
        <fullName evidence="1">Enantiomeric glycerophosphate synthase</fullName>
    </alternativeName>
    <alternativeName>
        <fullName evidence="1">sn-glycerol-1-phosphate dehydrogenase</fullName>
    </alternativeName>
</protein>
<reference key="1">
    <citation type="journal article" date="2004" name="J. Mol. Microbiol. Biotechnol.">
        <title>The complete genome sequence of Bacillus licheniformis DSM13, an organism with great industrial potential.</title>
        <authorList>
            <person name="Veith B."/>
            <person name="Herzberg C."/>
            <person name="Steckel S."/>
            <person name="Feesche J."/>
            <person name="Maurer K.H."/>
            <person name="Ehrenreich P."/>
            <person name="Baeumer S."/>
            <person name="Henne A."/>
            <person name="Liesegang H."/>
            <person name="Merkl R."/>
            <person name="Ehrenreich A."/>
            <person name="Gottschalk G."/>
        </authorList>
    </citation>
    <scope>NUCLEOTIDE SEQUENCE [LARGE SCALE GENOMIC DNA]</scope>
    <source>
        <strain>ATCC 14580 / DSM 13 / JCM 2505 / CCUG 7422 / NBRC 12200 / NCIMB 9375 / NCTC 10341 / NRRL NRS-1264 / Gibson 46</strain>
    </source>
</reference>
<reference key="2">
    <citation type="journal article" date="2004" name="Genome Biol.">
        <title>Complete genome sequence of the industrial bacterium Bacillus licheniformis and comparisons with closely related Bacillus species.</title>
        <authorList>
            <person name="Rey M.W."/>
            <person name="Ramaiya P."/>
            <person name="Nelson B.A."/>
            <person name="Brody-Karpin S.D."/>
            <person name="Zaretsky E.J."/>
            <person name="Tang M."/>
            <person name="Lopez de Leon A."/>
            <person name="Xiang H."/>
            <person name="Gusti V."/>
            <person name="Clausen I.G."/>
            <person name="Olsen P.B."/>
            <person name="Rasmussen M.D."/>
            <person name="Andersen J.T."/>
            <person name="Joergensen P.L."/>
            <person name="Larsen T.S."/>
            <person name="Sorokin A."/>
            <person name="Bolotin A."/>
            <person name="Lapidus A."/>
            <person name="Galleron N."/>
            <person name="Ehrlich S.D."/>
            <person name="Berka R.M."/>
        </authorList>
    </citation>
    <scope>NUCLEOTIDE SEQUENCE [LARGE SCALE GENOMIC DNA]</scope>
    <source>
        <strain>ATCC 14580 / DSM 13 / JCM 2505 / CCUG 7422 / NBRC 12200 / NCIMB 9375 / NCTC 10341 / NRRL NRS-1264 / Gibson 46</strain>
    </source>
</reference>
<organism>
    <name type="scientific">Bacillus licheniformis (strain ATCC 14580 / DSM 13 / JCM 2505 / CCUG 7422 / NBRC 12200 / NCIMB 9375 / NCTC 10341 / NRRL NRS-1264 / Gibson 46)</name>
    <dbReference type="NCBI Taxonomy" id="279010"/>
    <lineage>
        <taxon>Bacteria</taxon>
        <taxon>Bacillati</taxon>
        <taxon>Bacillota</taxon>
        <taxon>Bacilli</taxon>
        <taxon>Bacillales</taxon>
        <taxon>Bacillaceae</taxon>
        <taxon>Bacillus</taxon>
    </lineage>
</organism>
<comment type="function">
    <text evidence="1">Catalyzes the NAD(P)H-dependent reduction of dihydroxyacetonephosphate (DHAP or glycerone phosphate) to glycerol 1-phosphate (G1P). The G1P thus generated is probably used for the synthesis of phosphoglycerolipids in Gram-positive bacterial species.</text>
</comment>
<comment type="catalytic activity">
    <reaction evidence="1">
        <text>sn-glycerol 1-phosphate + NAD(+) = dihydroxyacetone phosphate + NADH + H(+)</text>
        <dbReference type="Rhea" id="RHEA:21412"/>
        <dbReference type="ChEBI" id="CHEBI:15378"/>
        <dbReference type="ChEBI" id="CHEBI:57540"/>
        <dbReference type="ChEBI" id="CHEBI:57642"/>
        <dbReference type="ChEBI" id="CHEBI:57685"/>
        <dbReference type="ChEBI" id="CHEBI:57945"/>
        <dbReference type="EC" id="1.1.1.261"/>
    </reaction>
</comment>
<comment type="catalytic activity">
    <reaction evidence="1">
        <text>sn-glycerol 1-phosphate + NADP(+) = dihydroxyacetone phosphate + NADPH + H(+)</text>
        <dbReference type="Rhea" id="RHEA:21416"/>
        <dbReference type="ChEBI" id="CHEBI:15378"/>
        <dbReference type="ChEBI" id="CHEBI:57642"/>
        <dbReference type="ChEBI" id="CHEBI:57685"/>
        <dbReference type="ChEBI" id="CHEBI:57783"/>
        <dbReference type="ChEBI" id="CHEBI:58349"/>
        <dbReference type="EC" id="1.1.1.261"/>
    </reaction>
</comment>
<comment type="cofactor">
    <cofactor evidence="1">
        <name>Ni(2+)</name>
        <dbReference type="ChEBI" id="CHEBI:49786"/>
    </cofactor>
    <text evidence="1">Binds 1 nickel ion per subunit.</text>
</comment>
<comment type="subunit">
    <text evidence="1">Homodimer.</text>
</comment>
<comment type="subcellular location">
    <subcellularLocation>
        <location evidence="1">Cytoplasm</location>
    </subcellularLocation>
</comment>
<comment type="similarity">
    <text evidence="1">Belongs to the glycerol-1-phosphate dehydrogenase family.</text>
</comment>
<dbReference type="EC" id="1.1.1.261" evidence="1"/>
<dbReference type="EMBL" id="CP000002">
    <property type="protein sequence ID" value="AAU24532.1"/>
    <property type="molecule type" value="Genomic_DNA"/>
</dbReference>
<dbReference type="EMBL" id="AE017333">
    <property type="protein sequence ID" value="AAU41891.1"/>
    <property type="molecule type" value="Genomic_DNA"/>
</dbReference>
<dbReference type="RefSeq" id="WP_011198184.1">
    <property type="nucleotide sequence ID" value="NC_006322.1"/>
</dbReference>
<dbReference type="SMR" id="Q65GC3"/>
<dbReference type="STRING" id="279010.BL00349"/>
<dbReference type="KEGG" id="bld:BLi03025"/>
<dbReference type="KEGG" id="bli:BL00349"/>
<dbReference type="PATRIC" id="fig|279010.13.peg.3087"/>
<dbReference type="eggNOG" id="COG0371">
    <property type="taxonomic scope" value="Bacteria"/>
</dbReference>
<dbReference type="HOGENOM" id="CLU_038362_1_0_9"/>
<dbReference type="Proteomes" id="UP000000606">
    <property type="component" value="Chromosome"/>
</dbReference>
<dbReference type="GO" id="GO:0005737">
    <property type="term" value="C:cytoplasm"/>
    <property type="evidence" value="ECO:0007669"/>
    <property type="project" value="UniProtKB-SubCell"/>
</dbReference>
<dbReference type="GO" id="GO:0106357">
    <property type="term" value="F:glycerol-1-phosphate dehydrogenase (NAD+) activity"/>
    <property type="evidence" value="ECO:0007669"/>
    <property type="project" value="RHEA"/>
</dbReference>
<dbReference type="GO" id="GO:0106358">
    <property type="term" value="F:glycerol-1-phosphate dehydrogenase (NADP+) activity"/>
    <property type="evidence" value="ECO:0007669"/>
    <property type="project" value="RHEA"/>
</dbReference>
<dbReference type="GO" id="GO:0046872">
    <property type="term" value="F:metal ion binding"/>
    <property type="evidence" value="ECO:0007669"/>
    <property type="project" value="UniProtKB-KW"/>
</dbReference>
<dbReference type="GO" id="GO:0006650">
    <property type="term" value="P:glycerophospholipid metabolic process"/>
    <property type="evidence" value="ECO:0007669"/>
    <property type="project" value="UniProtKB-UniRule"/>
</dbReference>
<dbReference type="GO" id="GO:0008654">
    <property type="term" value="P:phospholipid biosynthetic process"/>
    <property type="evidence" value="ECO:0007669"/>
    <property type="project" value="UniProtKB-KW"/>
</dbReference>
<dbReference type="CDD" id="cd08175">
    <property type="entry name" value="G1PDH"/>
    <property type="match status" value="1"/>
</dbReference>
<dbReference type="Gene3D" id="3.40.50.1970">
    <property type="match status" value="1"/>
</dbReference>
<dbReference type="Gene3D" id="1.20.1090.10">
    <property type="entry name" value="Dehydroquinate synthase-like - alpha domain"/>
    <property type="match status" value="1"/>
</dbReference>
<dbReference type="HAMAP" id="MF_00497_B">
    <property type="entry name" value="G1P_dehydrogenase_B"/>
    <property type="match status" value="1"/>
</dbReference>
<dbReference type="InterPro" id="IPR023003">
    <property type="entry name" value="G1P_dehydrogenase_bac"/>
</dbReference>
<dbReference type="InterPro" id="IPR032837">
    <property type="entry name" value="G1PDH"/>
</dbReference>
<dbReference type="InterPro" id="IPR016205">
    <property type="entry name" value="Glycerol_DH"/>
</dbReference>
<dbReference type="PANTHER" id="PTHR43616">
    <property type="entry name" value="GLYCEROL DEHYDROGENASE"/>
    <property type="match status" value="1"/>
</dbReference>
<dbReference type="PANTHER" id="PTHR43616:SF5">
    <property type="entry name" value="GLYCEROL DEHYDROGENASE 1"/>
    <property type="match status" value="1"/>
</dbReference>
<dbReference type="Pfam" id="PF13685">
    <property type="entry name" value="Fe-ADH_2"/>
    <property type="match status" value="1"/>
</dbReference>
<dbReference type="SUPFAM" id="SSF56796">
    <property type="entry name" value="Dehydroquinate synthase-like"/>
    <property type="match status" value="1"/>
</dbReference>